<evidence type="ECO:0000255" key="1">
    <source>
        <dbReference type="HAMAP-Rule" id="MF_00060"/>
    </source>
</evidence>
<keyword id="KW-0963">Cytoplasm</keyword>
<keyword id="KW-0378">Hydrolase</keyword>
<keyword id="KW-0479">Metal-binding</keyword>
<keyword id="KW-0547">Nucleotide-binding</keyword>
<feature type="chain" id="PRO_1000196577" description="5'-nucleotidase SurE">
    <location>
        <begin position="1"/>
        <end position="255"/>
    </location>
</feature>
<feature type="binding site" evidence="1">
    <location>
        <position position="8"/>
    </location>
    <ligand>
        <name>a divalent metal cation</name>
        <dbReference type="ChEBI" id="CHEBI:60240"/>
    </ligand>
</feature>
<feature type="binding site" evidence="1">
    <location>
        <position position="9"/>
    </location>
    <ligand>
        <name>a divalent metal cation</name>
        <dbReference type="ChEBI" id="CHEBI:60240"/>
    </ligand>
</feature>
<feature type="binding site" evidence="1">
    <location>
        <position position="39"/>
    </location>
    <ligand>
        <name>a divalent metal cation</name>
        <dbReference type="ChEBI" id="CHEBI:60240"/>
    </ligand>
</feature>
<feature type="binding site" evidence="1">
    <location>
        <position position="91"/>
    </location>
    <ligand>
        <name>a divalent metal cation</name>
        <dbReference type="ChEBI" id="CHEBI:60240"/>
    </ligand>
</feature>
<accession>B7I4K2</accession>
<sequence length="255" mass="27406">MNILIANDDGVFAPGIQALADALKPLGRVVVVAPESERSGFSSALTLDRPLRPIQIAEDVWAVNGTPADCVYLSMNGLFDFEFDLVVSGINSGANLGDDVLYSGTVGAAFEGRLMKQPAIAVSLAGPDVRSYDHKDDYAQAAKWVHDFIAKGLPALPPRHIFNINIPDVPQLKGTQITYQGRRAQSKPITSHVDPRGRQVYWIGLAGEAVTDPQRIASQIQSDFFAVANGFVSVTPIQMDATNYAVLEDLQASLG</sequence>
<dbReference type="EC" id="3.1.3.5" evidence="1"/>
<dbReference type="EMBL" id="CP001182">
    <property type="protein sequence ID" value="ACJ42208.1"/>
    <property type="molecule type" value="Genomic_DNA"/>
</dbReference>
<dbReference type="RefSeq" id="WP_001023216.1">
    <property type="nucleotide sequence ID" value="NC_011586.2"/>
</dbReference>
<dbReference type="SMR" id="B7I4K2"/>
<dbReference type="GeneID" id="92894738"/>
<dbReference type="KEGG" id="abn:AB57_2860"/>
<dbReference type="HOGENOM" id="CLU_045192_1_2_6"/>
<dbReference type="Proteomes" id="UP000007094">
    <property type="component" value="Chromosome"/>
</dbReference>
<dbReference type="GO" id="GO:0005737">
    <property type="term" value="C:cytoplasm"/>
    <property type="evidence" value="ECO:0007669"/>
    <property type="project" value="UniProtKB-SubCell"/>
</dbReference>
<dbReference type="GO" id="GO:0008254">
    <property type="term" value="F:3'-nucleotidase activity"/>
    <property type="evidence" value="ECO:0007669"/>
    <property type="project" value="TreeGrafter"/>
</dbReference>
<dbReference type="GO" id="GO:0008253">
    <property type="term" value="F:5'-nucleotidase activity"/>
    <property type="evidence" value="ECO:0007669"/>
    <property type="project" value="UniProtKB-UniRule"/>
</dbReference>
<dbReference type="GO" id="GO:0004309">
    <property type="term" value="F:exopolyphosphatase activity"/>
    <property type="evidence" value="ECO:0007669"/>
    <property type="project" value="TreeGrafter"/>
</dbReference>
<dbReference type="GO" id="GO:0046872">
    <property type="term" value="F:metal ion binding"/>
    <property type="evidence" value="ECO:0007669"/>
    <property type="project" value="UniProtKB-UniRule"/>
</dbReference>
<dbReference type="GO" id="GO:0000166">
    <property type="term" value="F:nucleotide binding"/>
    <property type="evidence" value="ECO:0007669"/>
    <property type="project" value="UniProtKB-KW"/>
</dbReference>
<dbReference type="FunFam" id="3.40.1210.10:FF:000001">
    <property type="entry name" value="5'/3'-nucleotidase SurE"/>
    <property type="match status" value="1"/>
</dbReference>
<dbReference type="Gene3D" id="3.40.1210.10">
    <property type="entry name" value="Survival protein SurE-like phosphatase/nucleotidase"/>
    <property type="match status" value="1"/>
</dbReference>
<dbReference type="HAMAP" id="MF_00060">
    <property type="entry name" value="SurE"/>
    <property type="match status" value="1"/>
</dbReference>
<dbReference type="InterPro" id="IPR030048">
    <property type="entry name" value="SurE"/>
</dbReference>
<dbReference type="InterPro" id="IPR002828">
    <property type="entry name" value="SurE-like_Pase/nucleotidase"/>
</dbReference>
<dbReference type="InterPro" id="IPR036523">
    <property type="entry name" value="SurE-like_sf"/>
</dbReference>
<dbReference type="NCBIfam" id="NF001490">
    <property type="entry name" value="PRK00346.1-4"/>
    <property type="match status" value="1"/>
</dbReference>
<dbReference type="NCBIfam" id="TIGR00087">
    <property type="entry name" value="surE"/>
    <property type="match status" value="1"/>
</dbReference>
<dbReference type="PANTHER" id="PTHR30457">
    <property type="entry name" value="5'-NUCLEOTIDASE SURE"/>
    <property type="match status" value="1"/>
</dbReference>
<dbReference type="PANTHER" id="PTHR30457:SF12">
    <property type="entry name" value="5'_3'-NUCLEOTIDASE SURE"/>
    <property type="match status" value="1"/>
</dbReference>
<dbReference type="Pfam" id="PF01975">
    <property type="entry name" value="SurE"/>
    <property type="match status" value="1"/>
</dbReference>
<dbReference type="SUPFAM" id="SSF64167">
    <property type="entry name" value="SurE-like"/>
    <property type="match status" value="1"/>
</dbReference>
<organism>
    <name type="scientific">Acinetobacter baumannii (strain AB0057)</name>
    <dbReference type="NCBI Taxonomy" id="480119"/>
    <lineage>
        <taxon>Bacteria</taxon>
        <taxon>Pseudomonadati</taxon>
        <taxon>Pseudomonadota</taxon>
        <taxon>Gammaproteobacteria</taxon>
        <taxon>Moraxellales</taxon>
        <taxon>Moraxellaceae</taxon>
        <taxon>Acinetobacter</taxon>
        <taxon>Acinetobacter calcoaceticus/baumannii complex</taxon>
    </lineage>
</organism>
<protein>
    <recommendedName>
        <fullName evidence="1">5'-nucleotidase SurE</fullName>
        <ecNumber evidence="1">3.1.3.5</ecNumber>
    </recommendedName>
    <alternativeName>
        <fullName evidence="1">Nucleoside 5'-monophosphate phosphohydrolase</fullName>
    </alternativeName>
</protein>
<reference key="1">
    <citation type="journal article" date="2008" name="J. Bacteriol.">
        <title>Comparative genome sequence analysis of multidrug-resistant Acinetobacter baumannii.</title>
        <authorList>
            <person name="Adams M.D."/>
            <person name="Goglin K."/>
            <person name="Molyneaux N."/>
            <person name="Hujer K.M."/>
            <person name="Lavender H."/>
            <person name="Jamison J.J."/>
            <person name="MacDonald I.J."/>
            <person name="Martin K.M."/>
            <person name="Russo T."/>
            <person name="Campagnari A.A."/>
            <person name="Hujer A.M."/>
            <person name="Bonomo R.A."/>
            <person name="Gill S.R."/>
        </authorList>
    </citation>
    <scope>NUCLEOTIDE SEQUENCE [LARGE SCALE GENOMIC DNA]</scope>
    <source>
        <strain>AB0057</strain>
    </source>
</reference>
<proteinExistence type="inferred from homology"/>
<comment type="function">
    <text evidence="1">Nucleotidase that shows phosphatase activity on nucleoside 5'-monophosphates.</text>
</comment>
<comment type="catalytic activity">
    <reaction evidence="1">
        <text>a ribonucleoside 5'-phosphate + H2O = a ribonucleoside + phosphate</text>
        <dbReference type="Rhea" id="RHEA:12484"/>
        <dbReference type="ChEBI" id="CHEBI:15377"/>
        <dbReference type="ChEBI" id="CHEBI:18254"/>
        <dbReference type="ChEBI" id="CHEBI:43474"/>
        <dbReference type="ChEBI" id="CHEBI:58043"/>
        <dbReference type="EC" id="3.1.3.5"/>
    </reaction>
</comment>
<comment type="cofactor">
    <cofactor evidence="1">
        <name>a divalent metal cation</name>
        <dbReference type="ChEBI" id="CHEBI:60240"/>
    </cofactor>
    <text evidence="1">Binds 1 divalent metal cation per subunit.</text>
</comment>
<comment type="subcellular location">
    <subcellularLocation>
        <location evidence="1">Cytoplasm</location>
    </subcellularLocation>
</comment>
<comment type="similarity">
    <text evidence="1">Belongs to the SurE nucleotidase family.</text>
</comment>
<name>SURE_ACIB5</name>
<gene>
    <name evidence="1" type="primary">surE</name>
    <name type="ordered locus">AB57_2860</name>
</gene>